<accession>P16409</accession>
<comment type="function">
    <text>Regulatory light chain of myosin. Does not bind calcium.</text>
</comment>
<comment type="subunit">
    <text>Myosin is a hexamer of 2 heavy chains and 4 light chains.</text>
</comment>
<comment type="tissue specificity">
    <text evidence="6">Expressed only in ventricular and slow twitch skeletal muscle tissues.</text>
</comment>
<comment type="PTM">
    <text evidence="1">N-terminus is methylated by METTL11A/NTM1.</text>
</comment>
<name>MYL3_RAT</name>
<evidence type="ECO:0000250" key="1"/>
<evidence type="ECO:0000250" key="2">
    <source>
        <dbReference type="UniProtKB" id="P08590"/>
    </source>
</evidence>
<evidence type="ECO:0000250" key="3">
    <source>
        <dbReference type="UniProtKB" id="P09542"/>
    </source>
</evidence>
<evidence type="ECO:0000255" key="4">
    <source>
        <dbReference type="PROSITE-ProRule" id="PRU00448"/>
    </source>
</evidence>
<evidence type="ECO:0000256" key="5">
    <source>
        <dbReference type="SAM" id="MobiDB-lite"/>
    </source>
</evidence>
<evidence type="ECO:0000269" key="6">
    <source>
    </source>
</evidence>
<evidence type="ECO:0000303" key="7">
    <source>
    </source>
</evidence>
<evidence type="ECO:0000303" key="8">
    <source>
    </source>
</evidence>
<evidence type="ECO:0000305" key="9"/>
<evidence type="ECO:0000305" key="10">
    <source>
    </source>
</evidence>
<evidence type="ECO:0000312" key="11">
    <source>
        <dbReference type="RGD" id="3142"/>
    </source>
</evidence>
<evidence type="ECO:0007744" key="12">
    <source>
    </source>
</evidence>
<organism>
    <name type="scientific">Rattus norvegicus</name>
    <name type="common">Rat</name>
    <dbReference type="NCBI Taxonomy" id="10116"/>
    <lineage>
        <taxon>Eukaryota</taxon>
        <taxon>Metazoa</taxon>
        <taxon>Chordata</taxon>
        <taxon>Craniata</taxon>
        <taxon>Vertebrata</taxon>
        <taxon>Euteleostomi</taxon>
        <taxon>Mammalia</taxon>
        <taxon>Eutheria</taxon>
        <taxon>Euarchontoglires</taxon>
        <taxon>Glires</taxon>
        <taxon>Rodentia</taxon>
        <taxon>Myomorpha</taxon>
        <taxon>Muroidea</taxon>
        <taxon>Muridae</taxon>
        <taxon>Murinae</taxon>
        <taxon>Rattus</taxon>
    </lineage>
</organism>
<feature type="initiator methionine" description="Removed" evidence="3">
    <location>
        <position position="1"/>
    </location>
</feature>
<feature type="chain" id="PRO_0000198698" description="Myosin light chain 3">
    <location>
        <begin position="2"/>
        <end position="200"/>
    </location>
</feature>
<feature type="domain" description="EF-hand 1" evidence="4">
    <location>
        <begin position="54"/>
        <end position="91"/>
    </location>
</feature>
<feature type="domain" description="EF-hand 2" evidence="4">
    <location>
        <begin position="133"/>
        <end position="168"/>
    </location>
</feature>
<feature type="domain" description="EF-hand 3" evidence="4">
    <location>
        <begin position="168"/>
        <end position="200"/>
    </location>
</feature>
<feature type="region of interest" description="Disordered" evidence="5">
    <location>
        <begin position="1"/>
        <end position="42"/>
    </location>
</feature>
<feature type="compositionally biased region" description="Basic and acidic residues" evidence="5">
    <location>
        <begin position="1"/>
        <end position="14"/>
    </location>
</feature>
<feature type="compositionally biased region" description="Low complexity" evidence="5">
    <location>
        <begin position="15"/>
        <end position="32"/>
    </location>
</feature>
<feature type="compositionally biased region" description="Basic and acidic residues" evidence="5">
    <location>
        <begin position="33"/>
        <end position="42"/>
    </location>
</feature>
<feature type="modified residue" description="N,N,N-trimethylalanine" evidence="3">
    <location>
        <position position="2"/>
    </location>
</feature>
<feature type="modified residue" description="Phosphothreonine" evidence="12">
    <location>
        <position position="93"/>
    </location>
</feature>
<feature type="modified residue" description="Phosphothreonine" evidence="3">
    <location>
        <position position="132"/>
    </location>
</feature>
<feature type="modified residue" description="Phosphothreonine" evidence="12">
    <location>
        <position position="134"/>
    </location>
</feature>
<feature type="modified residue" description="Phosphotyrosine" evidence="12">
    <location>
        <position position="135"/>
    </location>
</feature>
<feature type="modified residue" description="Phosphoserine" evidence="12">
    <location>
        <position position="184"/>
    </location>
</feature>
<proteinExistence type="evidence at protein level"/>
<reference key="1">
    <citation type="journal article" date="1989" name="Nucleic Acids Res.">
        <title>Ventricular myosin light chain 1 is developmentally regulated and does not change in hypertension.</title>
        <authorList>
            <person name="McNally E."/>
            <person name="Buttrick P."/>
            <person name="Leinwand L."/>
        </authorList>
    </citation>
    <scope>NUCLEOTIDE SEQUENCE [MRNA]</scope>
    <source>
        <tissue>Heart ventricle</tissue>
    </source>
</reference>
<reference key="2">
    <citation type="journal article" date="1989" name="Nucleic Acids Res.">
        <title>Characterization of a rat myosin alkali light chain gene expressed in ventricular and slow twitch skeletal muscles.</title>
        <authorList>
            <person name="Periasamy M."/>
            <person name="Wodgaonkar R."/>
            <person name="Kumar C."/>
            <person name="Martin B.J."/>
            <person name="Siddiqui M.A.Q."/>
        </authorList>
    </citation>
    <scope>NUCLEOTIDE SEQUENCE [GENOMIC DNA]</scope>
    <scope>TISSUE SPECIFICITY</scope>
    <source>
        <strain>Wistar</strain>
        <tissue>Heart ventricle</tissue>
    </source>
</reference>
<reference key="3">
    <citation type="journal article" date="2004" name="Genome Res.">
        <title>The status, quality, and expansion of the NIH full-length cDNA project: the Mammalian Gene Collection (MGC).</title>
        <authorList>
            <consortium name="The MGC Project Team"/>
        </authorList>
    </citation>
    <scope>NUCLEOTIDE SEQUENCE [LARGE SCALE MRNA]</scope>
    <source>
        <tissue>Heart</tissue>
    </source>
</reference>
<reference key="4">
    <citation type="journal article" date="2012" name="Nat. Commun.">
        <title>Quantitative maps of protein phosphorylation sites across 14 different rat organs and tissues.</title>
        <authorList>
            <person name="Lundby A."/>
            <person name="Secher A."/>
            <person name="Lage K."/>
            <person name="Nordsborg N.B."/>
            <person name="Dmytriyev A."/>
            <person name="Lundby C."/>
            <person name="Olsen J.V."/>
        </authorList>
    </citation>
    <scope>PHOSPHORYLATION [LARGE SCALE ANALYSIS] AT THR-93; THR-134; TYR-135 AND SER-184</scope>
    <scope>IDENTIFICATION BY MASS SPECTROMETRY [LARGE SCALE ANALYSIS]</scope>
</reference>
<keyword id="KW-0488">Methylation</keyword>
<keyword id="KW-0505">Motor protein</keyword>
<keyword id="KW-0514">Muscle protein</keyword>
<keyword id="KW-0518">Myosin</keyword>
<keyword id="KW-0597">Phosphoprotein</keyword>
<keyword id="KW-1185">Reference proteome</keyword>
<keyword id="KW-0677">Repeat</keyword>
<dbReference type="EMBL" id="X14812">
    <property type="protein sequence ID" value="CAA32917.1"/>
    <property type="molecule type" value="mRNA"/>
</dbReference>
<dbReference type="EMBL" id="X16325">
    <property type="protein sequence ID" value="CAA34388.1"/>
    <property type="molecule type" value="Genomic_DNA"/>
</dbReference>
<dbReference type="EMBL" id="X16326">
    <property type="protein sequence ID" value="CAA34388.1"/>
    <property type="status" value="JOINED"/>
    <property type="molecule type" value="Genomic_DNA"/>
</dbReference>
<dbReference type="EMBL" id="X16327">
    <property type="protein sequence ID" value="CAA34388.1"/>
    <property type="status" value="JOINED"/>
    <property type="molecule type" value="Genomic_DNA"/>
</dbReference>
<dbReference type="EMBL" id="X16329">
    <property type="protein sequence ID" value="CAA34388.1"/>
    <property type="status" value="JOINED"/>
    <property type="molecule type" value="Genomic_DNA"/>
</dbReference>
<dbReference type="EMBL" id="X16330">
    <property type="protein sequence ID" value="CAA34388.1"/>
    <property type="status" value="JOINED"/>
    <property type="molecule type" value="Genomic_DNA"/>
</dbReference>
<dbReference type="EMBL" id="BC081832">
    <property type="protein sequence ID" value="AAH81832.1"/>
    <property type="molecule type" value="mRNA"/>
</dbReference>
<dbReference type="PIR" id="S09573">
    <property type="entry name" value="MORT3V"/>
</dbReference>
<dbReference type="RefSeq" id="NP_036738.1">
    <property type="nucleotide sequence ID" value="NM_012606.2"/>
</dbReference>
<dbReference type="RefSeq" id="XP_006243979.3">
    <property type="nucleotide sequence ID" value="XM_006243917.5"/>
</dbReference>
<dbReference type="SMR" id="P16409"/>
<dbReference type="BioGRID" id="246728">
    <property type="interactions" value="3"/>
</dbReference>
<dbReference type="FunCoup" id="P16409">
    <property type="interactions" value="397"/>
</dbReference>
<dbReference type="IntAct" id="P16409">
    <property type="interactions" value="1"/>
</dbReference>
<dbReference type="MINT" id="P16409"/>
<dbReference type="STRING" id="10116.ENSRNOP00000028458"/>
<dbReference type="GlyGen" id="P16409">
    <property type="glycosylation" value="3 sites, 1 O-linked glycan (3 sites)"/>
</dbReference>
<dbReference type="iPTMnet" id="P16409"/>
<dbReference type="PhosphoSitePlus" id="P16409"/>
<dbReference type="SwissPalm" id="P16409"/>
<dbReference type="jPOST" id="P16409"/>
<dbReference type="PaxDb" id="10116-ENSRNOP00000028458"/>
<dbReference type="Ensembl" id="ENSRNOT00000028458.6">
    <property type="protein sequence ID" value="ENSRNOP00000028458.2"/>
    <property type="gene ID" value="ENSRNOG00000020955.6"/>
</dbReference>
<dbReference type="GeneID" id="24585"/>
<dbReference type="KEGG" id="rno:24585"/>
<dbReference type="AGR" id="RGD:3142"/>
<dbReference type="CTD" id="4634"/>
<dbReference type="RGD" id="3142">
    <property type="gene designation" value="Myl3"/>
</dbReference>
<dbReference type="eggNOG" id="KOG0030">
    <property type="taxonomic scope" value="Eukaryota"/>
</dbReference>
<dbReference type="GeneTree" id="ENSGT01030000234570"/>
<dbReference type="HOGENOM" id="CLU_061288_13_0_1"/>
<dbReference type="InParanoid" id="P16409"/>
<dbReference type="OMA" id="YDRTPKC"/>
<dbReference type="OrthoDB" id="64729at9989"/>
<dbReference type="PhylomeDB" id="P16409"/>
<dbReference type="TreeFam" id="TF351553"/>
<dbReference type="Reactome" id="R-RNO-390522">
    <property type="pathway name" value="Striated Muscle Contraction"/>
</dbReference>
<dbReference type="PRO" id="PR:P16409"/>
<dbReference type="Proteomes" id="UP000002494">
    <property type="component" value="Chromosome 8"/>
</dbReference>
<dbReference type="Bgee" id="ENSRNOG00000020955">
    <property type="expression patterns" value="Expressed in heart and 17 other cell types or tissues"/>
</dbReference>
<dbReference type="GO" id="GO:0031672">
    <property type="term" value="C:A band"/>
    <property type="evidence" value="ECO:0000266"/>
    <property type="project" value="RGD"/>
</dbReference>
<dbReference type="GO" id="GO:0031674">
    <property type="term" value="C:I band"/>
    <property type="evidence" value="ECO:0000266"/>
    <property type="project" value="RGD"/>
</dbReference>
<dbReference type="GO" id="GO:0016459">
    <property type="term" value="C:myosin complex"/>
    <property type="evidence" value="ECO:0000314"/>
    <property type="project" value="RGD"/>
</dbReference>
<dbReference type="GO" id="GO:0016460">
    <property type="term" value="C:myosin II complex"/>
    <property type="evidence" value="ECO:0000318"/>
    <property type="project" value="GO_Central"/>
</dbReference>
<dbReference type="GO" id="GO:0003785">
    <property type="term" value="F:actin monomer binding"/>
    <property type="evidence" value="ECO:0000266"/>
    <property type="project" value="RGD"/>
</dbReference>
<dbReference type="GO" id="GO:0005509">
    <property type="term" value="F:calcium ion binding"/>
    <property type="evidence" value="ECO:0007669"/>
    <property type="project" value="InterPro"/>
</dbReference>
<dbReference type="GO" id="GO:0003774">
    <property type="term" value="F:cytoskeletal motor activity"/>
    <property type="evidence" value="ECO:0000314"/>
    <property type="project" value="RGD"/>
</dbReference>
<dbReference type="GO" id="GO:0060048">
    <property type="term" value="P:cardiac muscle contraction"/>
    <property type="evidence" value="ECO:0000314"/>
    <property type="project" value="RGD"/>
</dbReference>
<dbReference type="GO" id="GO:0006936">
    <property type="term" value="P:muscle contraction"/>
    <property type="evidence" value="ECO:0000304"/>
    <property type="project" value="RGD"/>
</dbReference>
<dbReference type="GO" id="GO:0006942">
    <property type="term" value="P:regulation of striated muscle contraction"/>
    <property type="evidence" value="ECO:0000266"/>
    <property type="project" value="RGD"/>
</dbReference>
<dbReference type="GO" id="GO:0002026">
    <property type="term" value="P:regulation of the force of heart contraction"/>
    <property type="evidence" value="ECO:0000266"/>
    <property type="project" value="RGD"/>
</dbReference>
<dbReference type="GO" id="GO:0007519">
    <property type="term" value="P:skeletal muscle tissue development"/>
    <property type="evidence" value="ECO:0000270"/>
    <property type="project" value="RGD"/>
</dbReference>
<dbReference type="GO" id="GO:0055010">
    <property type="term" value="P:ventricular cardiac muscle tissue morphogenesis"/>
    <property type="evidence" value="ECO:0000266"/>
    <property type="project" value="RGD"/>
</dbReference>
<dbReference type="CDD" id="cd00051">
    <property type="entry name" value="EFh"/>
    <property type="match status" value="1"/>
</dbReference>
<dbReference type="FunFam" id="1.10.238.10:FF:000019">
    <property type="entry name" value="Myosin light chain 1 skeletal"/>
    <property type="match status" value="1"/>
</dbReference>
<dbReference type="FunFam" id="1.10.238.10:FF:000056">
    <property type="entry name" value="Myosin light chain 1 skeletal"/>
    <property type="match status" value="1"/>
</dbReference>
<dbReference type="Gene3D" id="1.10.238.10">
    <property type="entry name" value="EF-hand"/>
    <property type="match status" value="2"/>
</dbReference>
<dbReference type="InterPro" id="IPR050230">
    <property type="entry name" value="CALM/Myosin/TropC-like"/>
</dbReference>
<dbReference type="InterPro" id="IPR011992">
    <property type="entry name" value="EF-hand-dom_pair"/>
</dbReference>
<dbReference type="InterPro" id="IPR002048">
    <property type="entry name" value="EF_hand_dom"/>
</dbReference>
<dbReference type="PANTHER" id="PTHR23048">
    <property type="entry name" value="MYOSIN LIGHT CHAIN 1, 3"/>
    <property type="match status" value="1"/>
</dbReference>
<dbReference type="PANTHER" id="PTHR23048:SF2">
    <property type="entry name" value="MYOSIN LIGHT CHAIN 3"/>
    <property type="match status" value="1"/>
</dbReference>
<dbReference type="SUPFAM" id="SSF47473">
    <property type="entry name" value="EF-hand"/>
    <property type="match status" value="1"/>
</dbReference>
<dbReference type="PROSITE" id="PS50222">
    <property type="entry name" value="EF_HAND_2"/>
    <property type="match status" value="3"/>
</dbReference>
<gene>
    <name evidence="11" type="primary">Myl3</name>
    <name evidence="11" type="synonym">Mlc1v</name>
</gene>
<sequence length="200" mass="22156">MAPKKPEPKKDDAKTAAPKAAPAPAAAPAAAPEPERPKEAEFDASKIKIEFTPEQIEEFKEAFQLFDRTPKGEMKITYGQCGDVLRALGQNPTQAEVLRVLGKPKQEELNSKMMDFETFLPMLQHISKNKDTGTYEDFVEGLRVFDKEGNGTVMGAELRHVLATLGERLTEDEVEKLMAGQEDSNGCINYEAFVKHIMAS</sequence>
<protein>
    <recommendedName>
        <fullName evidence="9">Myosin light chain 3</fullName>
    </recommendedName>
    <alternativeName>
        <fullName evidence="10">Myosin alkali light chain 1, ventricular</fullName>
        <shortName evidence="8">MLClV</shortName>
    </alternativeName>
    <alternativeName>
        <fullName evidence="2">Myosin light chain 1, slow-twitch muscle B/ventricular isoform</fullName>
        <shortName evidence="2">MLC1SB</shortName>
    </alternativeName>
    <alternativeName>
        <fullName evidence="7">Ventricular myosin light chain 1</fullName>
        <shortName evidence="7">rVMLC1</shortName>
    </alternativeName>
</protein>